<dbReference type="EMBL" id="AB009054">
    <property type="protein sequence ID" value="BAB11022.1"/>
    <property type="status" value="ALT_INIT"/>
    <property type="molecule type" value="Genomic_DNA"/>
</dbReference>
<dbReference type="EMBL" id="CP002688">
    <property type="protein sequence ID" value="AED94438.1"/>
    <property type="molecule type" value="Genomic_DNA"/>
</dbReference>
<dbReference type="RefSeq" id="NP_198764.1">
    <property type="nucleotide sequence ID" value="NM_123310.1"/>
</dbReference>
<dbReference type="FunCoup" id="Q9FLY8">
    <property type="interactions" value="18"/>
</dbReference>
<dbReference type="PaxDb" id="3702-AT5G39480.1"/>
<dbReference type="ProteomicsDB" id="222511"/>
<dbReference type="EnsemblPlants" id="AT5G39480.1">
    <property type="protein sequence ID" value="AT5G39480.1"/>
    <property type="gene ID" value="AT5G39480"/>
</dbReference>
<dbReference type="GeneID" id="833944"/>
<dbReference type="Gramene" id="AT5G39480.1">
    <property type="protein sequence ID" value="AT5G39480.1"/>
    <property type="gene ID" value="AT5G39480"/>
</dbReference>
<dbReference type="KEGG" id="ath:AT5G39480"/>
<dbReference type="Araport" id="AT5G39480"/>
<dbReference type="TAIR" id="AT5G39480"/>
<dbReference type="eggNOG" id="ENOG502QTKH">
    <property type="taxonomic scope" value="Eukaryota"/>
</dbReference>
<dbReference type="HOGENOM" id="CLU_033857_0_0_1"/>
<dbReference type="InParanoid" id="Q9FLY8"/>
<dbReference type="OMA" id="ANSENVW"/>
<dbReference type="PRO" id="PR:Q9FLY8"/>
<dbReference type="Proteomes" id="UP000006548">
    <property type="component" value="Chromosome 5"/>
</dbReference>
<dbReference type="ExpressionAtlas" id="Q9FLY8">
    <property type="expression patterns" value="baseline"/>
</dbReference>
<dbReference type="GO" id="GO:0009536">
    <property type="term" value="C:plastid"/>
    <property type="evidence" value="ECO:0007005"/>
    <property type="project" value="TAIR"/>
</dbReference>
<dbReference type="InterPro" id="IPR040275">
    <property type="entry name" value="At5g39450-like"/>
</dbReference>
<dbReference type="InterPro" id="IPR036047">
    <property type="entry name" value="F-box-like_dom_sf"/>
</dbReference>
<dbReference type="InterPro" id="IPR001810">
    <property type="entry name" value="F-box_dom"/>
</dbReference>
<dbReference type="PANTHER" id="PTHR31370">
    <property type="entry name" value="F-BOX PROTEIN FAMILY-LIKE"/>
    <property type="match status" value="1"/>
</dbReference>
<dbReference type="PANTHER" id="PTHR31370:SF2">
    <property type="entry name" value="OS08G0105100 PROTEIN"/>
    <property type="match status" value="1"/>
</dbReference>
<dbReference type="SUPFAM" id="SSF81383">
    <property type="entry name" value="F-box domain"/>
    <property type="match status" value="1"/>
</dbReference>
<dbReference type="PROSITE" id="PS50181">
    <property type="entry name" value="FBOX"/>
    <property type="match status" value="1"/>
</dbReference>
<sequence length="568" mass="64282">MMNKESFGACLLLTLPEDVFAVISRFLSPSDICNLILCGKSLPALVDTEKMWLVQCEEVKVLPLLEIVQWRIGISSYKALCRFLVEVVKPLLGIWVQQNPELGNVVYVMPGFLSVVGCRIIPQKVAPSWIQEDRVKWSPVFEIICGFDGSNGFFLHGRDKEGSCLYPGFVMGIEKSCNVLQLDVVPRQEKSSCNEIERGASREEGEIPFWMLAFSDRKNLLNIVTSHVSLHVVEPLNEMLFPTLKYDEAMLVERRTILLKMHKFGGNWKNMNLEEDDQLCYNPMQVKINEMLENLGDDYFFDEEELIEVTPTENTNVLGESSSSKNTTPSQSEIRVSNRQSFLSSGDTFGLGLTASYSEMSYYKGWPYMHFHHFLLYKLPVKKAVDQEAYAGLWGGTIGCPAGKCPKGKTEKSLYLLMLTYEESEEHSERVLIGTKILEGKRYVRHPNGTAMFVVKIDTPSLDPFPVDANETHFENSYSGEGIAEGYSFRYTGSKPGSLFVITNDLLAFVWKETKVVITLQRLNLTEILKKGLGSCVPPLPPSKNFTYMRRSFINEFTKLSTDSSYSE</sequence>
<protein>
    <recommendedName>
        <fullName>Putative F-box protein At5g39480</fullName>
    </recommendedName>
</protein>
<feature type="chain" id="PRO_0000283540" description="Putative F-box protein At5g39480">
    <location>
        <begin position="1"/>
        <end position="568"/>
    </location>
</feature>
<feature type="domain" description="F-box" evidence="1">
    <location>
        <begin position="9"/>
        <end position="55"/>
    </location>
</feature>
<feature type="region of interest" description="Disordered" evidence="2">
    <location>
        <begin position="315"/>
        <end position="337"/>
    </location>
</feature>
<feature type="compositionally biased region" description="Low complexity" evidence="2">
    <location>
        <begin position="321"/>
        <end position="332"/>
    </location>
</feature>
<organism>
    <name type="scientific">Arabidopsis thaliana</name>
    <name type="common">Mouse-ear cress</name>
    <dbReference type="NCBI Taxonomy" id="3702"/>
    <lineage>
        <taxon>Eukaryota</taxon>
        <taxon>Viridiplantae</taxon>
        <taxon>Streptophyta</taxon>
        <taxon>Embryophyta</taxon>
        <taxon>Tracheophyta</taxon>
        <taxon>Spermatophyta</taxon>
        <taxon>Magnoliopsida</taxon>
        <taxon>eudicotyledons</taxon>
        <taxon>Gunneridae</taxon>
        <taxon>Pentapetalae</taxon>
        <taxon>rosids</taxon>
        <taxon>malvids</taxon>
        <taxon>Brassicales</taxon>
        <taxon>Brassicaceae</taxon>
        <taxon>Camelineae</taxon>
        <taxon>Arabidopsis</taxon>
    </lineage>
</organism>
<accession>Q9FLY8</accession>
<reference key="1">
    <citation type="journal article" date="1998" name="DNA Res.">
        <title>Structural analysis of Arabidopsis thaliana chromosome 5. IV. Sequence features of the regions of 1,456,315 bp covered by nineteen physically assigned P1 and TAC clones.</title>
        <authorList>
            <person name="Sato S."/>
            <person name="Kaneko T."/>
            <person name="Kotani H."/>
            <person name="Nakamura Y."/>
            <person name="Asamizu E."/>
            <person name="Miyajima N."/>
            <person name="Tabata S."/>
        </authorList>
    </citation>
    <scope>NUCLEOTIDE SEQUENCE [LARGE SCALE GENOMIC DNA]</scope>
    <source>
        <strain>cv. Columbia</strain>
    </source>
</reference>
<reference key="2">
    <citation type="journal article" date="2017" name="Plant J.">
        <title>Araport11: a complete reannotation of the Arabidopsis thaliana reference genome.</title>
        <authorList>
            <person name="Cheng C.Y."/>
            <person name="Krishnakumar V."/>
            <person name="Chan A.P."/>
            <person name="Thibaud-Nissen F."/>
            <person name="Schobel S."/>
            <person name="Town C.D."/>
        </authorList>
    </citation>
    <scope>GENOME REANNOTATION</scope>
    <source>
        <strain>cv. Columbia</strain>
    </source>
</reference>
<proteinExistence type="predicted"/>
<evidence type="ECO:0000255" key="1">
    <source>
        <dbReference type="PROSITE-ProRule" id="PRU00080"/>
    </source>
</evidence>
<evidence type="ECO:0000256" key="2">
    <source>
        <dbReference type="SAM" id="MobiDB-lite"/>
    </source>
</evidence>
<evidence type="ECO:0000305" key="3"/>
<comment type="sequence caution" evidence="3">
    <conflict type="erroneous initiation">
        <sequence resource="EMBL-CDS" id="BAB11022"/>
    </conflict>
    <text>Truncated N-terminus.</text>
</comment>
<gene>
    <name type="ordered locus">At5g39480</name>
    <name type="ORF">MUL8.17</name>
</gene>
<keyword id="KW-1185">Reference proteome</keyword>
<name>FB274_ARATH</name>